<sequence length="430" mass="45461">MGKISKAVRGVADIYNGASLIVRIIVGLIIGTVLALTMPHVTWIGEFGTLFVAALKAAAPILVFVLVASALAQGTSKLDRRFGTVLFLYLFTTFLAAVVAVLTSRLFPQTLSLGKAAKADVVPQGLSEVIQTLLTNIVANPIQAIIDGNYICILMWACLFGLAMKSIANESSKAFMANVADAVSQVIRWVINLAPFGIMGLVFTNVADNGLSAFTKYGSLLLLLVGTMLLMVLVFGPLVIFIFLRRNPYPLVYRCFKESGLTAFFTRSSAANIPVNMQLCEKLGLDKDMYSVSIPLGATINMNGAAITITIMAMAAANTLGIQISLPAAILLSVVSALGACGASGVAGGSLLLIPMACSLFGISNDIAMQVVGVGFIIGVIQDSVETCLNSASDVEFAATAEYHAWLKQGRQLPAFMYSKKERAKLGIEA</sequence>
<name>SSTT_BIFAA</name>
<organism>
    <name type="scientific">Bifidobacterium adolescentis (strain ATCC 15703 / DSM 20083 / NCTC 11814 / E194a)</name>
    <dbReference type="NCBI Taxonomy" id="367928"/>
    <lineage>
        <taxon>Bacteria</taxon>
        <taxon>Bacillati</taxon>
        <taxon>Actinomycetota</taxon>
        <taxon>Actinomycetes</taxon>
        <taxon>Bifidobacteriales</taxon>
        <taxon>Bifidobacteriaceae</taxon>
        <taxon>Bifidobacterium</taxon>
    </lineage>
</organism>
<reference key="1">
    <citation type="submission" date="2006-12" db="EMBL/GenBank/DDBJ databases">
        <title>Bifidobacterium adolescentis complete genome sequence.</title>
        <authorList>
            <person name="Suzuki T."/>
            <person name="Tsuda Y."/>
            <person name="Kanou N."/>
            <person name="Inoue T."/>
            <person name="Kumazaki K."/>
            <person name="Nagano S."/>
            <person name="Hirai S."/>
            <person name="Tanaka K."/>
            <person name="Watanabe K."/>
        </authorList>
    </citation>
    <scope>NUCLEOTIDE SEQUENCE [LARGE SCALE GENOMIC DNA]</scope>
    <source>
        <strain>ATCC 15703 / DSM 20083 / NCTC 11814 / E194a</strain>
    </source>
</reference>
<protein>
    <recommendedName>
        <fullName evidence="1">Serine/threonine transporter SstT</fullName>
    </recommendedName>
    <alternativeName>
        <fullName evidence="1">Na(+)/serine-threonine symporter</fullName>
    </alternativeName>
</protein>
<accession>A1A0M3</accession>
<evidence type="ECO:0000255" key="1">
    <source>
        <dbReference type="HAMAP-Rule" id="MF_01582"/>
    </source>
</evidence>
<comment type="function">
    <text evidence="1">Involved in the import of serine and threonine into the cell, with the concomitant import of sodium (symport system).</text>
</comment>
<comment type="catalytic activity">
    <reaction evidence="1">
        <text>L-serine(in) + Na(+)(in) = L-serine(out) + Na(+)(out)</text>
        <dbReference type="Rhea" id="RHEA:29575"/>
        <dbReference type="ChEBI" id="CHEBI:29101"/>
        <dbReference type="ChEBI" id="CHEBI:33384"/>
    </reaction>
    <physiologicalReaction direction="right-to-left" evidence="1">
        <dbReference type="Rhea" id="RHEA:29577"/>
    </physiologicalReaction>
</comment>
<comment type="catalytic activity">
    <reaction evidence="1">
        <text>L-threonine(in) + Na(+)(in) = L-threonine(out) + Na(+)(out)</text>
        <dbReference type="Rhea" id="RHEA:69999"/>
        <dbReference type="ChEBI" id="CHEBI:29101"/>
        <dbReference type="ChEBI" id="CHEBI:57926"/>
    </reaction>
    <physiologicalReaction direction="right-to-left" evidence="1">
        <dbReference type="Rhea" id="RHEA:70001"/>
    </physiologicalReaction>
</comment>
<comment type="subcellular location">
    <subcellularLocation>
        <location evidence="1">Cell membrane</location>
        <topology evidence="1">Multi-pass membrane protein</topology>
    </subcellularLocation>
</comment>
<comment type="similarity">
    <text evidence="1">Belongs to the dicarboxylate/amino acid:cation symporter (DAACS) (TC 2.A.23) family.</text>
</comment>
<dbReference type="EMBL" id="AP009256">
    <property type="protein sequence ID" value="BAF39256.1"/>
    <property type="molecule type" value="Genomic_DNA"/>
</dbReference>
<dbReference type="RefSeq" id="WP_011742928.1">
    <property type="nucleotide sequence ID" value="NZ_CAXVNC010000001.1"/>
</dbReference>
<dbReference type="SMR" id="A1A0M3"/>
<dbReference type="STRING" id="367928.BAD_0475"/>
<dbReference type="PaxDb" id="1680-BADO_0492"/>
<dbReference type="GeneID" id="4556401"/>
<dbReference type="KEGG" id="bad:BAD_0475"/>
<dbReference type="HOGENOM" id="CLU_044581_0_0_11"/>
<dbReference type="Proteomes" id="UP000008702">
    <property type="component" value="Chromosome"/>
</dbReference>
<dbReference type="GO" id="GO:0005886">
    <property type="term" value="C:plasma membrane"/>
    <property type="evidence" value="ECO:0007669"/>
    <property type="project" value="UniProtKB-SubCell"/>
</dbReference>
<dbReference type="GO" id="GO:0015171">
    <property type="term" value="F:amino acid transmembrane transporter activity"/>
    <property type="evidence" value="ECO:0007669"/>
    <property type="project" value="UniProtKB-UniRule"/>
</dbReference>
<dbReference type="GO" id="GO:0015293">
    <property type="term" value="F:symporter activity"/>
    <property type="evidence" value="ECO:0007669"/>
    <property type="project" value="UniProtKB-UniRule"/>
</dbReference>
<dbReference type="GO" id="GO:0032329">
    <property type="term" value="P:serine transport"/>
    <property type="evidence" value="ECO:0007669"/>
    <property type="project" value="InterPro"/>
</dbReference>
<dbReference type="GO" id="GO:0015826">
    <property type="term" value="P:threonine transport"/>
    <property type="evidence" value="ECO:0007669"/>
    <property type="project" value="InterPro"/>
</dbReference>
<dbReference type="Gene3D" id="1.10.3860.10">
    <property type="entry name" value="Sodium:dicarboxylate symporter"/>
    <property type="match status" value="1"/>
</dbReference>
<dbReference type="HAMAP" id="MF_01582">
    <property type="entry name" value="Ser_Thr_transp_SstT"/>
    <property type="match status" value="1"/>
</dbReference>
<dbReference type="InterPro" id="IPR001991">
    <property type="entry name" value="Na-dicarboxylate_symporter"/>
</dbReference>
<dbReference type="InterPro" id="IPR036458">
    <property type="entry name" value="Na:dicarbo_symporter_sf"/>
</dbReference>
<dbReference type="InterPro" id="IPR023025">
    <property type="entry name" value="Ser_Thr_transp_SstT"/>
</dbReference>
<dbReference type="NCBIfam" id="NF010151">
    <property type="entry name" value="PRK13628.1"/>
    <property type="match status" value="1"/>
</dbReference>
<dbReference type="PANTHER" id="PTHR42865">
    <property type="entry name" value="PROTON/GLUTAMATE-ASPARTATE SYMPORTER"/>
    <property type="match status" value="1"/>
</dbReference>
<dbReference type="PANTHER" id="PTHR42865:SF7">
    <property type="entry name" value="PROTON_GLUTAMATE-ASPARTATE SYMPORTER"/>
    <property type="match status" value="1"/>
</dbReference>
<dbReference type="Pfam" id="PF00375">
    <property type="entry name" value="SDF"/>
    <property type="match status" value="1"/>
</dbReference>
<dbReference type="PRINTS" id="PR00173">
    <property type="entry name" value="EDTRNSPORT"/>
</dbReference>
<dbReference type="SUPFAM" id="SSF118215">
    <property type="entry name" value="Proton glutamate symport protein"/>
    <property type="match status" value="1"/>
</dbReference>
<feature type="chain" id="PRO_0000309075" description="Serine/threonine transporter SstT">
    <location>
        <begin position="1"/>
        <end position="430"/>
    </location>
</feature>
<feature type="transmembrane region" description="Helical" evidence="1">
    <location>
        <begin position="24"/>
        <end position="44"/>
    </location>
</feature>
<feature type="transmembrane region" description="Helical" evidence="1">
    <location>
        <begin position="47"/>
        <end position="67"/>
    </location>
</feature>
<feature type="transmembrane region" description="Helical" evidence="1">
    <location>
        <begin position="82"/>
        <end position="102"/>
    </location>
</feature>
<feature type="transmembrane region" description="Helical" evidence="1">
    <location>
        <begin position="144"/>
        <end position="164"/>
    </location>
</feature>
<feature type="transmembrane region" description="Helical" evidence="1">
    <location>
        <begin position="186"/>
        <end position="206"/>
    </location>
</feature>
<feature type="transmembrane region" description="Helical" evidence="1">
    <location>
        <begin position="223"/>
        <end position="243"/>
    </location>
</feature>
<feature type="transmembrane region" description="Helical" evidence="1">
    <location>
        <begin position="294"/>
        <end position="314"/>
    </location>
</feature>
<feature type="transmembrane region" description="Helical" evidence="1">
    <location>
        <begin position="320"/>
        <end position="340"/>
    </location>
</feature>
<feature type="transmembrane region" description="Helical" evidence="1">
    <location>
        <begin position="361"/>
        <end position="381"/>
    </location>
</feature>
<proteinExistence type="inferred from homology"/>
<gene>
    <name evidence="1" type="primary">sstT</name>
    <name type="ordered locus">BAD_0475</name>
</gene>
<keyword id="KW-0029">Amino-acid transport</keyword>
<keyword id="KW-1003">Cell membrane</keyword>
<keyword id="KW-0472">Membrane</keyword>
<keyword id="KW-1185">Reference proteome</keyword>
<keyword id="KW-0769">Symport</keyword>
<keyword id="KW-0812">Transmembrane</keyword>
<keyword id="KW-1133">Transmembrane helix</keyword>
<keyword id="KW-0813">Transport</keyword>